<gene>
    <name evidence="1" type="primary">rplL</name>
    <name type="ordered locus">BUAPTUC7_035</name>
</gene>
<organism>
    <name type="scientific">Buchnera aphidicola subsp. Acyrthosiphon pisum (strain Tuc7)</name>
    <dbReference type="NCBI Taxonomy" id="561501"/>
    <lineage>
        <taxon>Bacteria</taxon>
        <taxon>Pseudomonadati</taxon>
        <taxon>Pseudomonadota</taxon>
        <taxon>Gammaproteobacteria</taxon>
        <taxon>Enterobacterales</taxon>
        <taxon>Erwiniaceae</taxon>
        <taxon>Buchnera</taxon>
    </lineage>
</organism>
<comment type="function">
    <text evidence="1">Forms part of the ribosomal stalk which helps the ribosome interact with GTP-bound translation factors. Is thus essential for accurate translation.</text>
</comment>
<comment type="subunit">
    <text evidence="1">Homodimer. Part of the ribosomal stalk of the 50S ribosomal subunit. Forms a multimeric L10(L12)X complex, where L10 forms an elongated spine to which 2 to 4 L12 dimers bind in a sequential fashion. Binds GTP-bound translation factors.</text>
</comment>
<comment type="similarity">
    <text evidence="1">Belongs to the bacterial ribosomal protein bL12 family.</text>
</comment>
<name>RL7_BUCAT</name>
<feature type="chain" id="PRO_1000195778" description="Large ribosomal subunit protein bL12">
    <location>
        <begin position="1"/>
        <end position="122"/>
    </location>
</feature>
<sequence length="122" mass="13439">MSITKEQILEAISEMSVMNVVDLITAMEEKFGVSASMSINSNNHNEKDLREEKTEFDIFLKVIGPNKVSVIKTVRSATGLGLKEAKDLVESAPTVLKENISKEDAESLKKTLEDVGAEIEIK</sequence>
<protein>
    <recommendedName>
        <fullName evidence="1">Large ribosomal subunit protein bL12</fullName>
    </recommendedName>
    <alternativeName>
        <fullName evidence="2">50S ribosomal protein L7/L12</fullName>
    </alternativeName>
</protein>
<dbReference type="EMBL" id="CP001158">
    <property type="protein sequence ID" value="ACL29866.1"/>
    <property type="molecule type" value="Genomic_DNA"/>
</dbReference>
<dbReference type="RefSeq" id="WP_009873996.1">
    <property type="nucleotide sequence ID" value="NC_011834.1"/>
</dbReference>
<dbReference type="SMR" id="B8D6V1"/>
<dbReference type="KEGG" id="bau:BUAPTUC7_035"/>
<dbReference type="HOGENOM" id="CLU_086499_3_2_6"/>
<dbReference type="GO" id="GO:0022625">
    <property type="term" value="C:cytosolic large ribosomal subunit"/>
    <property type="evidence" value="ECO:0007669"/>
    <property type="project" value="TreeGrafter"/>
</dbReference>
<dbReference type="GO" id="GO:0003729">
    <property type="term" value="F:mRNA binding"/>
    <property type="evidence" value="ECO:0007669"/>
    <property type="project" value="TreeGrafter"/>
</dbReference>
<dbReference type="GO" id="GO:0003735">
    <property type="term" value="F:structural constituent of ribosome"/>
    <property type="evidence" value="ECO:0007669"/>
    <property type="project" value="InterPro"/>
</dbReference>
<dbReference type="GO" id="GO:0006412">
    <property type="term" value="P:translation"/>
    <property type="evidence" value="ECO:0007669"/>
    <property type="project" value="UniProtKB-UniRule"/>
</dbReference>
<dbReference type="CDD" id="cd00387">
    <property type="entry name" value="Ribosomal_L7_L12"/>
    <property type="match status" value="1"/>
</dbReference>
<dbReference type="FunFam" id="3.30.1390.10:FF:000001">
    <property type="entry name" value="50S ribosomal protein L7/L12"/>
    <property type="match status" value="1"/>
</dbReference>
<dbReference type="Gene3D" id="3.30.1390.10">
    <property type="match status" value="1"/>
</dbReference>
<dbReference type="Gene3D" id="1.20.5.710">
    <property type="entry name" value="Single helix bin"/>
    <property type="match status" value="1"/>
</dbReference>
<dbReference type="HAMAP" id="MF_00368">
    <property type="entry name" value="Ribosomal_bL12"/>
    <property type="match status" value="1"/>
</dbReference>
<dbReference type="InterPro" id="IPR000206">
    <property type="entry name" value="Ribosomal_bL12"/>
</dbReference>
<dbReference type="InterPro" id="IPR013823">
    <property type="entry name" value="Ribosomal_bL12_C"/>
</dbReference>
<dbReference type="InterPro" id="IPR014719">
    <property type="entry name" value="Ribosomal_bL12_C/ClpS-like"/>
</dbReference>
<dbReference type="InterPro" id="IPR008932">
    <property type="entry name" value="Ribosomal_bL12_oligo"/>
</dbReference>
<dbReference type="InterPro" id="IPR036235">
    <property type="entry name" value="Ribosomal_bL12_oligo_N_sf"/>
</dbReference>
<dbReference type="NCBIfam" id="TIGR00855">
    <property type="entry name" value="L12"/>
    <property type="match status" value="1"/>
</dbReference>
<dbReference type="PANTHER" id="PTHR45987">
    <property type="entry name" value="39S RIBOSOMAL PROTEIN L12"/>
    <property type="match status" value="1"/>
</dbReference>
<dbReference type="PANTHER" id="PTHR45987:SF4">
    <property type="entry name" value="LARGE RIBOSOMAL SUBUNIT PROTEIN BL12M"/>
    <property type="match status" value="1"/>
</dbReference>
<dbReference type="Pfam" id="PF00542">
    <property type="entry name" value="Ribosomal_L12"/>
    <property type="match status" value="1"/>
</dbReference>
<dbReference type="Pfam" id="PF16320">
    <property type="entry name" value="Ribosomal_L12_N"/>
    <property type="match status" value="1"/>
</dbReference>
<dbReference type="SUPFAM" id="SSF54736">
    <property type="entry name" value="ClpS-like"/>
    <property type="match status" value="1"/>
</dbReference>
<dbReference type="SUPFAM" id="SSF48300">
    <property type="entry name" value="Ribosomal protein L7/12, oligomerisation (N-terminal) domain"/>
    <property type="match status" value="1"/>
</dbReference>
<accession>B8D6V1</accession>
<evidence type="ECO:0000255" key="1">
    <source>
        <dbReference type="HAMAP-Rule" id="MF_00368"/>
    </source>
</evidence>
<evidence type="ECO:0000305" key="2"/>
<reference key="1">
    <citation type="journal article" date="2009" name="Science">
        <title>The dynamics and time scale of ongoing genomic erosion in symbiotic bacteria.</title>
        <authorList>
            <person name="Moran N.A."/>
            <person name="McLaughlin H.J."/>
            <person name="Sorek R."/>
        </authorList>
    </citation>
    <scope>NUCLEOTIDE SEQUENCE [LARGE SCALE GENOMIC DNA]</scope>
    <source>
        <strain>Tuc7</strain>
    </source>
</reference>
<proteinExistence type="inferred from homology"/>
<keyword id="KW-0687">Ribonucleoprotein</keyword>
<keyword id="KW-0689">Ribosomal protein</keyword>